<dbReference type="SMR" id="C0HLC3"/>
<dbReference type="GO" id="GO:0005576">
    <property type="term" value="C:extracellular region"/>
    <property type="evidence" value="ECO:0007669"/>
    <property type="project" value="UniProtKB-SubCell"/>
</dbReference>
<dbReference type="GO" id="GO:0006952">
    <property type="term" value="P:defense response"/>
    <property type="evidence" value="ECO:0007669"/>
    <property type="project" value="UniProtKB-KW"/>
</dbReference>
<dbReference type="InterPro" id="IPR022731">
    <property type="entry name" value="Dermaseptin_dom"/>
</dbReference>
<dbReference type="Pfam" id="PF12121">
    <property type="entry name" value="DD_K"/>
    <property type="match status" value="1"/>
</dbReference>
<feature type="peptide" id="PRO_0000445222" description="Dermaseptin-9TR" evidence="2">
    <location>
        <begin position="1"/>
        <end position="29"/>
    </location>
</feature>
<proteinExistence type="evidence at protein level"/>
<reference evidence="4" key="1">
    <citation type="journal article" date="2018" name="Comp. Biochem. Physiol.">
        <title>Peptidomic analysis of the host-defense peptides in skin secretions of the Trinidadian leaf frog Phyllomedusa trinitatis (Phyllomedusidae).</title>
        <authorList>
            <person name="Mechkarska M."/>
            <person name="Coquet L."/>
            <person name="Leprince J."/>
            <person name="Auguste R.J."/>
            <person name="Jouenne T."/>
            <person name="Mangoni M.L."/>
            <person name="Conlon J.M."/>
        </authorList>
    </citation>
    <scope>PROTEIN SEQUENCE</scope>
    <scope>SUBCELLULAR LOCATION</scope>
    <scope>MASS SPECTROMETRY</scope>
    <source>
        <tissue evidence="3">Skin secretion</tissue>
    </source>
</reference>
<accession>C0HLC3</accession>
<protein>
    <recommendedName>
        <fullName evidence="3">Dermaseptin-9TR</fullName>
    </recommendedName>
</protein>
<comment type="function">
    <text evidence="1">Has antimicrobial activity.</text>
</comment>
<comment type="subcellular location">
    <subcellularLocation>
        <location evidence="2">Secreted</location>
    </subcellularLocation>
</comment>
<comment type="tissue specificity">
    <text evidence="5">Expressed by the skin glands.</text>
</comment>
<comment type="mass spectrometry" mass="2809.1" method="MALDI" evidence="2"/>
<comment type="similarity">
    <text evidence="4">Belongs to the frog skin active peptide (FSAP) family. Dermaseptin subfamily.</text>
</comment>
<evidence type="ECO:0000250" key="1">
    <source>
        <dbReference type="UniProtKB" id="P84921"/>
    </source>
</evidence>
<evidence type="ECO:0000269" key="2">
    <source>
    </source>
</evidence>
<evidence type="ECO:0000303" key="3">
    <source>
    </source>
</evidence>
<evidence type="ECO:0000305" key="4"/>
<evidence type="ECO:0000305" key="5">
    <source>
    </source>
</evidence>
<name>DRS9_PHYTB</name>
<sequence length="29" mass="2810">GLWSKIKDAGKAVLKAAGKAALGAVTDAV</sequence>
<organism evidence="3">
    <name type="scientific">Phyllomedusa trinitatis</name>
    <name type="common">Trinidad leaf frog</name>
    <dbReference type="NCBI Taxonomy" id="332092"/>
    <lineage>
        <taxon>Eukaryota</taxon>
        <taxon>Metazoa</taxon>
        <taxon>Chordata</taxon>
        <taxon>Craniata</taxon>
        <taxon>Vertebrata</taxon>
        <taxon>Euteleostomi</taxon>
        <taxon>Amphibia</taxon>
        <taxon>Batrachia</taxon>
        <taxon>Anura</taxon>
        <taxon>Neobatrachia</taxon>
        <taxon>Hyloidea</taxon>
        <taxon>Hylidae</taxon>
        <taxon>Phyllomedusinae</taxon>
        <taxon>Phyllomedusa</taxon>
    </lineage>
</organism>
<keyword id="KW-0878">Amphibian defense peptide</keyword>
<keyword id="KW-0929">Antimicrobial</keyword>
<keyword id="KW-0903">Direct protein sequencing</keyword>
<keyword id="KW-0964">Secreted</keyword>